<proteinExistence type="evidence at transcript level"/>
<name>CRE1_NEUCR</name>
<feature type="chain" id="PRO_0000046877" description="DNA-binding protein cre-1">
    <location>
        <begin position="1"/>
        <end position="430"/>
    </location>
</feature>
<feature type="zinc finger region" description="C2H2-type 1" evidence="2">
    <location>
        <begin position="78"/>
        <end position="100"/>
    </location>
</feature>
<feature type="zinc finger region" description="C2H2-type 2" evidence="2">
    <location>
        <begin position="106"/>
        <end position="130"/>
    </location>
</feature>
<feature type="region of interest" description="Disordered" evidence="3">
    <location>
        <begin position="1"/>
        <end position="77"/>
    </location>
</feature>
<feature type="region of interest" description="Disordered" evidence="3">
    <location>
        <begin position="97"/>
        <end position="187"/>
    </location>
</feature>
<feature type="region of interest" description="Disordered" evidence="3">
    <location>
        <begin position="265"/>
        <end position="340"/>
    </location>
</feature>
<feature type="region of interest" description="Disordered" evidence="3">
    <location>
        <begin position="357"/>
        <end position="430"/>
    </location>
</feature>
<feature type="compositionally biased region" description="Polar residues" evidence="3">
    <location>
        <begin position="1"/>
        <end position="19"/>
    </location>
</feature>
<feature type="compositionally biased region" description="Low complexity" evidence="3">
    <location>
        <begin position="30"/>
        <end position="46"/>
    </location>
</feature>
<feature type="compositionally biased region" description="Basic and acidic residues" evidence="3">
    <location>
        <begin position="97"/>
        <end position="106"/>
    </location>
</feature>
<feature type="compositionally biased region" description="Polar residues" evidence="3">
    <location>
        <begin position="130"/>
        <end position="147"/>
    </location>
</feature>
<feature type="compositionally biased region" description="Polar residues" evidence="3">
    <location>
        <begin position="175"/>
        <end position="187"/>
    </location>
</feature>
<feature type="compositionally biased region" description="Basic and acidic residues" evidence="3">
    <location>
        <begin position="268"/>
        <end position="277"/>
    </location>
</feature>
<feature type="compositionally biased region" description="Low complexity" evidence="3">
    <location>
        <begin position="289"/>
        <end position="303"/>
    </location>
</feature>
<feature type="compositionally biased region" description="Polar residues" evidence="3">
    <location>
        <begin position="412"/>
        <end position="422"/>
    </location>
</feature>
<feature type="sequence conflict" description="In Ref. 1; AAC13555." evidence="4" ref="1">
    <original>A</original>
    <variation>T</variation>
    <location>
        <position position="351"/>
    </location>
</feature>
<feature type="sequence conflict" description="In Ref. 1; AAC13555." evidence="4" ref="1">
    <original>A</original>
    <variation>P</variation>
    <location>
        <position position="369"/>
    </location>
</feature>
<dbReference type="EMBL" id="AF055464">
    <property type="protein sequence ID" value="AAC13555.1"/>
    <property type="molecule type" value="mRNA"/>
</dbReference>
<dbReference type="EMBL" id="CM002239">
    <property type="protein sequence ID" value="EAA32758.1"/>
    <property type="molecule type" value="Genomic_DNA"/>
</dbReference>
<dbReference type="RefSeq" id="XP_961994.1">
    <property type="nucleotide sequence ID" value="XM_956901.3"/>
</dbReference>
<dbReference type="SMR" id="O59958"/>
<dbReference type="STRING" id="367110.O59958"/>
<dbReference type="PaxDb" id="5141-EFNCRP00000008726"/>
<dbReference type="EnsemblFungi" id="EAA32758">
    <property type="protein sequence ID" value="EAA32758"/>
    <property type="gene ID" value="NCU08807"/>
</dbReference>
<dbReference type="GeneID" id="3878142"/>
<dbReference type="KEGG" id="ncr:NCU08807"/>
<dbReference type="VEuPathDB" id="FungiDB:NCU08807"/>
<dbReference type="HOGENOM" id="CLU_036230_0_0_1"/>
<dbReference type="InParanoid" id="O59958"/>
<dbReference type="OMA" id="YHMARSH"/>
<dbReference type="OrthoDB" id="654211at2759"/>
<dbReference type="Proteomes" id="UP000001805">
    <property type="component" value="Chromosome 4, Linkage Group IV"/>
</dbReference>
<dbReference type="GO" id="GO:0005737">
    <property type="term" value="C:cytoplasm"/>
    <property type="evidence" value="ECO:0000318"/>
    <property type="project" value="GO_Central"/>
</dbReference>
<dbReference type="GO" id="GO:0005634">
    <property type="term" value="C:nucleus"/>
    <property type="evidence" value="ECO:0000318"/>
    <property type="project" value="GO_Central"/>
</dbReference>
<dbReference type="GO" id="GO:0000978">
    <property type="term" value="F:RNA polymerase II cis-regulatory region sequence-specific DNA binding"/>
    <property type="evidence" value="ECO:0000318"/>
    <property type="project" value="GO_Central"/>
</dbReference>
<dbReference type="GO" id="GO:0008270">
    <property type="term" value="F:zinc ion binding"/>
    <property type="evidence" value="ECO:0007669"/>
    <property type="project" value="UniProtKB-KW"/>
</dbReference>
<dbReference type="GO" id="GO:0006355">
    <property type="term" value="P:regulation of DNA-templated transcription"/>
    <property type="evidence" value="ECO:0007669"/>
    <property type="project" value="UniProtKB-ARBA"/>
</dbReference>
<dbReference type="FunFam" id="3.30.160.60:FF:000089">
    <property type="entry name" value="DNA-binding protein creA"/>
    <property type="match status" value="1"/>
</dbReference>
<dbReference type="FunFam" id="3.30.160.60:FF:000152">
    <property type="entry name" value="DNA-binding protein creA"/>
    <property type="match status" value="1"/>
</dbReference>
<dbReference type="Gene3D" id="3.30.160.60">
    <property type="entry name" value="Classic Zinc Finger"/>
    <property type="match status" value="2"/>
</dbReference>
<dbReference type="InterPro" id="IPR051007">
    <property type="entry name" value="creA/MIG_C2H2-ZnF"/>
</dbReference>
<dbReference type="InterPro" id="IPR036236">
    <property type="entry name" value="Znf_C2H2_sf"/>
</dbReference>
<dbReference type="InterPro" id="IPR013087">
    <property type="entry name" value="Znf_C2H2_type"/>
</dbReference>
<dbReference type="PANTHER" id="PTHR47428">
    <property type="entry name" value="REGULATORY PROTEIN MIG1-RELATED"/>
    <property type="match status" value="1"/>
</dbReference>
<dbReference type="PANTHER" id="PTHR47428:SF1">
    <property type="entry name" value="REGULATORY PROTEIN MIG1-RELATED"/>
    <property type="match status" value="1"/>
</dbReference>
<dbReference type="Pfam" id="PF00096">
    <property type="entry name" value="zf-C2H2"/>
    <property type="match status" value="2"/>
</dbReference>
<dbReference type="SMART" id="SM00355">
    <property type="entry name" value="ZnF_C2H2"/>
    <property type="match status" value="2"/>
</dbReference>
<dbReference type="SUPFAM" id="SSF57667">
    <property type="entry name" value="beta-beta-alpha zinc fingers"/>
    <property type="match status" value="1"/>
</dbReference>
<dbReference type="PROSITE" id="PS00028">
    <property type="entry name" value="ZINC_FINGER_C2H2_1"/>
    <property type="match status" value="2"/>
</dbReference>
<dbReference type="PROSITE" id="PS50157">
    <property type="entry name" value="ZINC_FINGER_C2H2_2"/>
    <property type="match status" value="2"/>
</dbReference>
<gene>
    <name type="primary">cre-1</name>
    <name type="ORF">NCU08807</name>
</gene>
<sequence>MQRVQSAVDFSNLLNPSESTAEKRDHSGSPRQQTAQPQQQQQQPQPEADMATVGLLRPNGPLPGAQATEPANELPRPYKCPLCDKAFHRLEHQTRHIRTHTGEKPHACQFPGCSKKFSRSDELTRHSRIHSNPNSRRGNKGQQQQQHPLVHNHGLQPDMMPPPGPKAIRSAPPTAMSSPNVSPPHSYSPYNFAPSGLNPYSHSRSSAGSQSGPDISLLARAAGQVERDGAAHHHFQPRFQFYGNTLHAATASRNQLPGLQAYHMSRSHSHEDHDDHYGQSYRHAKRSRPNSPNSTAPSSPTFSHDSLSPTPDHTPLATPAHSPRLRPHPGLELPPFRNLSLGQQHTTPALAPLEPALDGQFSLPQTPPAAPRSSGMSLTDIISRPDGTQRKLPVPKVAVQDLLGPADGFNPSVRNSSSTSLSGAEMMDRL</sequence>
<reference key="1">
    <citation type="journal article" date="1999" name="Fungal Genet. Biol.">
        <title>Carbon regulation of ribosomal genes in Neurospora crassa occurs by a mechanism which does not require Cre-1, the homologue of the Aspergillus carbon catabolite repressor, CreA.</title>
        <authorList>
            <person name="de la Serna I."/>
            <person name="Ng D."/>
            <person name="Tyler B.M."/>
        </authorList>
    </citation>
    <scope>NUCLEOTIDE SEQUENCE [MRNA]</scope>
    <source>
        <strain>ATCC 24698 / 74-OR23-1A / CBS 708.71 / DSM 1257 / FGSC 987</strain>
    </source>
</reference>
<reference key="2">
    <citation type="journal article" date="2003" name="Nature">
        <title>The genome sequence of the filamentous fungus Neurospora crassa.</title>
        <authorList>
            <person name="Galagan J.E."/>
            <person name="Calvo S.E."/>
            <person name="Borkovich K.A."/>
            <person name="Selker E.U."/>
            <person name="Read N.D."/>
            <person name="Jaffe D.B."/>
            <person name="FitzHugh W."/>
            <person name="Ma L.-J."/>
            <person name="Smirnov S."/>
            <person name="Purcell S."/>
            <person name="Rehman B."/>
            <person name="Elkins T."/>
            <person name="Engels R."/>
            <person name="Wang S."/>
            <person name="Nielsen C.B."/>
            <person name="Butler J."/>
            <person name="Endrizzi M."/>
            <person name="Qui D."/>
            <person name="Ianakiev P."/>
            <person name="Bell-Pedersen D."/>
            <person name="Nelson M.A."/>
            <person name="Werner-Washburne M."/>
            <person name="Selitrennikoff C.P."/>
            <person name="Kinsey J.A."/>
            <person name="Braun E.L."/>
            <person name="Zelter A."/>
            <person name="Schulte U."/>
            <person name="Kothe G.O."/>
            <person name="Jedd G."/>
            <person name="Mewes H.-W."/>
            <person name="Staben C."/>
            <person name="Marcotte E."/>
            <person name="Greenberg D."/>
            <person name="Roy A."/>
            <person name="Foley K."/>
            <person name="Naylor J."/>
            <person name="Stange-Thomann N."/>
            <person name="Barrett R."/>
            <person name="Gnerre S."/>
            <person name="Kamal M."/>
            <person name="Kamvysselis M."/>
            <person name="Mauceli E.W."/>
            <person name="Bielke C."/>
            <person name="Rudd S."/>
            <person name="Frishman D."/>
            <person name="Krystofova S."/>
            <person name="Rasmussen C."/>
            <person name="Metzenberg R.L."/>
            <person name="Perkins D.D."/>
            <person name="Kroken S."/>
            <person name="Cogoni C."/>
            <person name="Macino G."/>
            <person name="Catcheside D.E.A."/>
            <person name="Li W."/>
            <person name="Pratt R.J."/>
            <person name="Osmani S.A."/>
            <person name="DeSouza C.P.C."/>
            <person name="Glass N.L."/>
            <person name="Orbach M.J."/>
            <person name="Berglund J.A."/>
            <person name="Voelker R."/>
            <person name="Yarden O."/>
            <person name="Plamann M."/>
            <person name="Seiler S."/>
            <person name="Dunlap J.C."/>
            <person name="Radford A."/>
            <person name="Aramayo R."/>
            <person name="Natvig D.O."/>
            <person name="Alex L.A."/>
            <person name="Mannhaupt G."/>
            <person name="Ebbole D.J."/>
            <person name="Freitag M."/>
            <person name="Paulsen I."/>
            <person name="Sachs M.S."/>
            <person name="Lander E.S."/>
            <person name="Nusbaum C."/>
            <person name="Birren B.W."/>
        </authorList>
    </citation>
    <scope>NUCLEOTIDE SEQUENCE [LARGE SCALE GENOMIC DNA]</scope>
    <source>
        <strain>ATCC 24698 / 74-OR23-1A / CBS 708.71 / DSM 1257 / FGSC 987</strain>
    </source>
</reference>
<accession>O59958</accession>
<accession>Q7RVF3</accession>
<protein>
    <recommendedName>
        <fullName>DNA-binding protein cre-1</fullName>
    </recommendedName>
    <alternativeName>
        <fullName>Carbon catabolite repressor</fullName>
    </alternativeName>
</protein>
<comment type="function">
    <text evidence="1">Involved in carbon catabolite repression. Represses the transcription of a number of genes by binding to a GC-rich region in their promoter (By similarity).</text>
</comment>
<comment type="subcellular location">
    <subcellularLocation>
        <location evidence="1">Nucleus</location>
    </subcellularLocation>
</comment>
<comment type="similarity">
    <text evidence="4">Belongs to the creA/MIG C2H2-type zinc-finger protein family.</text>
</comment>
<evidence type="ECO:0000250" key="1"/>
<evidence type="ECO:0000255" key="2">
    <source>
        <dbReference type="PROSITE-ProRule" id="PRU00042"/>
    </source>
</evidence>
<evidence type="ECO:0000256" key="3">
    <source>
        <dbReference type="SAM" id="MobiDB-lite"/>
    </source>
</evidence>
<evidence type="ECO:0000305" key="4"/>
<keyword id="KW-0238">DNA-binding</keyword>
<keyword id="KW-0479">Metal-binding</keyword>
<keyword id="KW-0539">Nucleus</keyword>
<keyword id="KW-1185">Reference proteome</keyword>
<keyword id="KW-0677">Repeat</keyword>
<keyword id="KW-0678">Repressor</keyword>
<keyword id="KW-0804">Transcription</keyword>
<keyword id="KW-0805">Transcription regulation</keyword>
<keyword id="KW-0862">Zinc</keyword>
<keyword id="KW-0863">Zinc-finger</keyword>
<organism>
    <name type="scientific">Neurospora crassa (strain ATCC 24698 / 74-OR23-1A / CBS 708.71 / DSM 1257 / FGSC 987)</name>
    <dbReference type="NCBI Taxonomy" id="367110"/>
    <lineage>
        <taxon>Eukaryota</taxon>
        <taxon>Fungi</taxon>
        <taxon>Dikarya</taxon>
        <taxon>Ascomycota</taxon>
        <taxon>Pezizomycotina</taxon>
        <taxon>Sordariomycetes</taxon>
        <taxon>Sordariomycetidae</taxon>
        <taxon>Sordariales</taxon>
        <taxon>Sordariaceae</taxon>
        <taxon>Neurospora</taxon>
    </lineage>
</organism>